<organism>
    <name type="scientific">Coxiella burnetii (strain RSA 493 / Nine Mile phase I)</name>
    <dbReference type="NCBI Taxonomy" id="227377"/>
    <lineage>
        <taxon>Bacteria</taxon>
        <taxon>Pseudomonadati</taxon>
        <taxon>Pseudomonadota</taxon>
        <taxon>Gammaproteobacteria</taxon>
        <taxon>Legionellales</taxon>
        <taxon>Coxiellaceae</taxon>
        <taxon>Coxiella</taxon>
    </lineage>
</organism>
<comment type="function">
    <text evidence="1">Could be involved in insertion of integral membrane proteins into the membrane.</text>
</comment>
<comment type="subcellular location">
    <subcellularLocation>
        <location evidence="1">Cell inner membrane</location>
        <topology evidence="1">Peripheral membrane protein</topology>
        <orientation evidence="1">Cytoplasmic side</orientation>
    </subcellularLocation>
</comment>
<comment type="similarity">
    <text evidence="1">Belongs to the UPF0161 family.</text>
</comment>
<comment type="sequence caution" evidence="2">
    <conflict type="erroneous initiation">
        <sequence resource="EMBL-CDS" id="AAO91410"/>
    </conflict>
</comment>
<proteinExistence type="inferred from homology"/>
<keyword id="KW-0997">Cell inner membrane</keyword>
<keyword id="KW-1003">Cell membrane</keyword>
<keyword id="KW-0472">Membrane</keyword>
<keyword id="KW-1185">Reference proteome</keyword>
<feature type="chain" id="PRO_0000171818" description="Putative membrane protein insertion efficiency factor">
    <location>
        <begin position="1"/>
        <end position="88"/>
    </location>
</feature>
<protein>
    <recommendedName>
        <fullName evidence="1">Putative membrane protein insertion efficiency factor</fullName>
    </recommendedName>
</protein>
<sequence length="88" mass="9923">MYKQIVHAIGKAIQTLLLGLIKSYRYLISPVLMSSCRFYPSCSCYAETALKRFGVIKGSGLTVWRLLRCHPFHPGGVDFVPEKSNEMV</sequence>
<gene>
    <name type="ordered locus">CBU_1919</name>
</gene>
<evidence type="ECO:0000255" key="1">
    <source>
        <dbReference type="HAMAP-Rule" id="MF_00386"/>
    </source>
</evidence>
<evidence type="ECO:0000305" key="2"/>
<name>YIDD_COXBU</name>
<accession>P45649</accession>
<reference key="1">
    <citation type="journal article" date="1994" name="J. Bacteriol.">
        <title>Cloning and characterization of an autonomous replication sequence from Coxiella burnetii.</title>
        <authorList>
            <person name="Suhan M."/>
            <person name="Chen S.Y."/>
            <person name="Thompson H.A."/>
            <person name="Hoover T.A."/>
            <person name="Hill A."/>
            <person name="Williams J.C."/>
        </authorList>
    </citation>
    <scope>NUCLEOTIDE SEQUENCE [GENOMIC DNA]</scope>
    <source>
        <strain>Nine Mile phase I / Bratislava</strain>
    </source>
</reference>
<reference key="2">
    <citation type="journal article" date="2003" name="Proc. Natl. Acad. Sci. U.S.A.">
        <title>Complete genome sequence of the Q-fever pathogen, Coxiella burnetii.</title>
        <authorList>
            <person name="Seshadri R."/>
            <person name="Paulsen I.T."/>
            <person name="Eisen J.A."/>
            <person name="Read T.D."/>
            <person name="Nelson K.E."/>
            <person name="Nelson W.C."/>
            <person name="Ward N.L."/>
            <person name="Tettelin H."/>
            <person name="Davidsen T.M."/>
            <person name="Beanan M.J."/>
            <person name="DeBoy R.T."/>
            <person name="Daugherty S.C."/>
            <person name="Brinkac L.M."/>
            <person name="Madupu R."/>
            <person name="Dodson R.J."/>
            <person name="Khouri H.M."/>
            <person name="Lee K.H."/>
            <person name="Carty H.A."/>
            <person name="Scanlan D."/>
            <person name="Heinzen R.A."/>
            <person name="Thompson H.A."/>
            <person name="Samuel J.E."/>
            <person name="Fraser C.M."/>
            <person name="Heidelberg J.F."/>
        </authorList>
    </citation>
    <scope>NUCLEOTIDE SEQUENCE [LARGE SCALE GENOMIC DNA]</scope>
    <source>
        <strain>RSA 493 / Nine Mile phase I</strain>
    </source>
</reference>
<dbReference type="EMBL" id="U10529">
    <property type="protein sequence ID" value="AAA56918.1"/>
    <property type="molecule type" value="Genomic_DNA"/>
</dbReference>
<dbReference type="EMBL" id="AE016828">
    <property type="protein sequence ID" value="AAO91410.2"/>
    <property type="status" value="ALT_INIT"/>
    <property type="molecule type" value="Genomic_DNA"/>
</dbReference>
<dbReference type="PIR" id="I40653">
    <property type="entry name" value="I40653"/>
</dbReference>
<dbReference type="RefSeq" id="NP_820896.3">
    <property type="nucleotide sequence ID" value="NC_002971.4"/>
</dbReference>
<dbReference type="STRING" id="227377.CBU_1919"/>
<dbReference type="EnsemblBacteria" id="AAO91410">
    <property type="protein sequence ID" value="AAO91410"/>
    <property type="gene ID" value="CBU_1919"/>
</dbReference>
<dbReference type="GeneID" id="1209832"/>
<dbReference type="KEGG" id="cbu:CBU_1919"/>
<dbReference type="PATRIC" id="fig|227377.7.peg.1903"/>
<dbReference type="eggNOG" id="COG0759">
    <property type="taxonomic scope" value="Bacteria"/>
</dbReference>
<dbReference type="HOGENOM" id="CLU_144811_6_2_6"/>
<dbReference type="OrthoDB" id="9801753at2"/>
<dbReference type="Proteomes" id="UP000002671">
    <property type="component" value="Chromosome"/>
</dbReference>
<dbReference type="GO" id="GO:0005886">
    <property type="term" value="C:plasma membrane"/>
    <property type="evidence" value="ECO:0007669"/>
    <property type="project" value="UniProtKB-SubCell"/>
</dbReference>
<dbReference type="HAMAP" id="MF_00386">
    <property type="entry name" value="UPF0161_YidD"/>
    <property type="match status" value="1"/>
</dbReference>
<dbReference type="InterPro" id="IPR002696">
    <property type="entry name" value="Membr_insert_effic_factor_YidD"/>
</dbReference>
<dbReference type="NCBIfam" id="TIGR00278">
    <property type="entry name" value="membrane protein insertion efficiency factor YidD"/>
    <property type="match status" value="1"/>
</dbReference>
<dbReference type="PANTHER" id="PTHR33383">
    <property type="entry name" value="MEMBRANE PROTEIN INSERTION EFFICIENCY FACTOR-RELATED"/>
    <property type="match status" value="1"/>
</dbReference>
<dbReference type="PANTHER" id="PTHR33383:SF1">
    <property type="entry name" value="MEMBRANE PROTEIN INSERTION EFFICIENCY FACTOR-RELATED"/>
    <property type="match status" value="1"/>
</dbReference>
<dbReference type="Pfam" id="PF01809">
    <property type="entry name" value="YidD"/>
    <property type="match status" value="1"/>
</dbReference>
<dbReference type="SMART" id="SM01234">
    <property type="entry name" value="Haemolytic"/>
    <property type="match status" value="1"/>
</dbReference>